<keyword id="KW-0202">Cytokine</keyword>
<keyword id="KW-0903">Direct protein sequencing</keyword>
<keyword id="KW-1015">Disulfide bond</keyword>
<keyword id="KW-0325">Glycoprotein</keyword>
<keyword id="KW-0339">Growth factor</keyword>
<keyword id="KW-1185">Reference proteome</keyword>
<keyword id="KW-0964">Secreted</keyword>
<keyword id="KW-0732">Signal</keyword>
<organism>
    <name type="scientific">Mus musculus</name>
    <name type="common">Mouse</name>
    <dbReference type="NCBI Taxonomy" id="10090"/>
    <lineage>
        <taxon>Eukaryota</taxon>
        <taxon>Metazoa</taxon>
        <taxon>Chordata</taxon>
        <taxon>Craniata</taxon>
        <taxon>Vertebrata</taxon>
        <taxon>Euteleostomi</taxon>
        <taxon>Mammalia</taxon>
        <taxon>Eutheria</taxon>
        <taxon>Euarchontoglires</taxon>
        <taxon>Glires</taxon>
        <taxon>Rodentia</taxon>
        <taxon>Myomorpha</taxon>
        <taxon>Muroidea</taxon>
        <taxon>Muridae</taxon>
        <taxon>Murinae</taxon>
        <taxon>Mus</taxon>
        <taxon>Mus</taxon>
    </lineage>
</organism>
<evidence type="ECO:0000250" key="1">
    <source>
        <dbReference type="UniProtKB" id="P13232"/>
    </source>
</evidence>
<evidence type="ECO:0000255" key="2"/>
<evidence type="ECO:0000269" key="3">
    <source>
    </source>
</evidence>
<evidence type="ECO:0000269" key="4">
    <source>
    </source>
</evidence>
<evidence type="ECO:0000305" key="5"/>
<proteinExistence type="evidence at protein level"/>
<dbReference type="EMBL" id="X07962">
    <property type="protein sequence ID" value="CAA30779.1"/>
    <property type="molecule type" value="mRNA"/>
</dbReference>
<dbReference type="EMBL" id="M29057">
    <property type="protein sequence ID" value="AAA39303.1"/>
    <property type="molecule type" value="Genomic_DNA"/>
</dbReference>
<dbReference type="EMBL" id="M29054">
    <property type="protein sequence ID" value="AAA39303.1"/>
    <property type="status" value="JOINED"/>
    <property type="molecule type" value="Genomic_DNA"/>
</dbReference>
<dbReference type="EMBL" id="M29055">
    <property type="protein sequence ID" value="AAA39303.1"/>
    <property type="status" value="JOINED"/>
    <property type="molecule type" value="Genomic_DNA"/>
</dbReference>
<dbReference type="EMBL" id="M29056">
    <property type="protein sequence ID" value="AAA39303.1"/>
    <property type="status" value="JOINED"/>
    <property type="molecule type" value="Genomic_DNA"/>
</dbReference>
<dbReference type="CCDS" id="CCDS50859.1"/>
<dbReference type="PIR" id="S03171">
    <property type="entry name" value="S03171"/>
</dbReference>
<dbReference type="RefSeq" id="NP_032397.1">
    <property type="nucleotide sequence ID" value="NM_008371.5"/>
</dbReference>
<dbReference type="SMR" id="P10168"/>
<dbReference type="FunCoup" id="P10168">
    <property type="interactions" value="1005"/>
</dbReference>
<dbReference type="STRING" id="10090.ENSMUSP00000141845"/>
<dbReference type="GlyCosmos" id="P10168">
    <property type="glycosylation" value="2 sites, No reported glycans"/>
</dbReference>
<dbReference type="GlyGen" id="P10168">
    <property type="glycosylation" value="2 sites"/>
</dbReference>
<dbReference type="PaxDb" id="10090-ENSMUSP00000126219"/>
<dbReference type="ProteomicsDB" id="267236"/>
<dbReference type="Antibodypedia" id="12401">
    <property type="antibodies" value="798 antibodies from 38 providers"/>
</dbReference>
<dbReference type="DNASU" id="16196"/>
<dbReference type="Ensembl" id="ENSMUST00000194279.6">
    <property type="protein sequence ID" value="ENSMUSP00000141845.2"/>
    <property type="gene ID" value="ENSMUSG00000040329.15"/>
</dbReference>
<dbReference type="GeneID" id="16196"/>
<dbReference type="KEGG" id="mmu:16196"/>
<dbReference type="UCSC" id="uc008ooi.1">
    <property type="organism name" value="mouse"/>
</dbReference>
<dbReference type="AGR" id="MGI:96561"/>
<dbReference type="CTD" id="3574"/>
<dbReference type="MGI" id="MGI:96561">
    <property type="gene designation" value="Il7"/>
</dbReference>
<dbReference type="VEuPathDB" id="HostDB:ENSMUSG00000040329"/>
<dbReference type="eggNOG" id="ENOG502SW6R">
    <property type="taxonomic scope" value="Eukaryota"/>
</dbReference>
<dbReference type="GeneTree" id="ENSGT00390000004451"/>
<dbReference type="HOGENOM" id="CLU_129929_1_0_1"/>
<dbReference type="InParanoid" id="P10168"/>
<dbReference type="OMA" id="NMSAEYR"/>
<dbReference type="OrthoDB" id="9829887at2759"/>
<dbReference type="PhylomeDB" id="P10168"/>
<dbReference type="TreeFam" id="TF338065"/>
<dbReference type="Reactome" id="R-MMU-1266695">
    <property type="pathway name" value="Interleukin-7 signaling"/>
</dbReference>
<dbReference type="BioGRID-ORCS" id="16196">
    <property type="hits" value="3 hits in 78 CRISPR screens"/>
</dbReference>
<dbReference type="PRO" id="PR:P10168"/>
<dbReference type="Proteomes" id="UP000000589">
    <property type="component" value="Chromosome 3"/>
</dbReference>
<dbReference type="RNAct" id="P10168">
    <property type="molecule type" value="protein"/>
</dbReference>
<dbReference type="Bgee" id="ENSMUSG00000040329">
    <property type="expression patterns" value="Expressed in secondary oocyte and 72 other cell types or tissues"/>
</dbReference>
<dbReference type="ExpressionAtlas" id="P10168">
    <property type="expression patterns" value="baseline and differential"/>
</dbReference>
<dbReference type="GO" id="GO:0005576">
    <property type="term" value="C:extracellular region"/>
    <property type="evidence" value="ECO:0000304"/>
    <property type="project" value="Reactome"/>
</dbReference>
<dbReference type="GO" id="GO:0005615">
    <property type="term" value="C:extracellular space"/>
    <property type="evidence" value="ECO:0000314"/>
    <property type="project" value="MGI"/>
</dbReference>
<dbReference type="GO" id="GO:0005125">
    <property type="term" value="F:cytokine activity"/>
    <property type="evidence" value="ECO:0000314"/>
    <property type="project" value="MGI"/>
</dbReference>
<dbReference type="GO" id="GO:0008083">
    <property type="term" value="F:growth factor activity"/>
    <property type="evidence" value="ECO:0000314"/>
    <property type="project" value="MGI"/>
</dbReference>
<dbReference type="GO" id="GO:0005139">
    <property type="term" value="F:interleukin-7 receptor binding"/>
    <property type="evidence" value="ECO:0007669"/>
    <property type="project" value="InterPro"/>
</dbReference>
<dbReference type="GO" id="GO:0042100">
    <property type="term" value="P:B cell proliferation"/>
    <property type="evidence" value="ECO:0000316"/>
    <property type="project" value="MGI"/>
</dbReference>
<dbReference type="GO" id="GO:0045453">
    <property type="term" value="P:bone resorption"/>
    <property type="evidence" value="ECO:0000314"/>
    <property type="project" value="MGI"/>
</dbReference>
<dbReference type="GO" id="GO:0097191">
    <property type="term" value="P:extrinsic apoptotic signaling pathway"/>
    <property type="evidence" value="ECO:0000314"/>
    <property type="project" value="MGI"/>
</dbReference>
<dbReference type="GO" id="GO:0048873">
    <property type="term" value="P:homeostasis of number of cells within a tissue"/>
    <property type="evidence" value="ECO:0000315"/>
    <property type="project" value="MGI"/>
</dbReference>
<dbReference type="GO" id="GO:0006955">
    <property type="term" value="P:immune response"/>
    <property type="evidence" value="ECO:0007669"/>
    <property type="project" value="InterPro"/>
</dbReference>
<dbReference type="GO" id="GO:0038111">
    <property type="term" value="P:interleukin-7-mediated signaling pathway"/>
    <property type="evidence" value="ECO:0007669"/>
    <property type="project" value="Ensembl"/>
</dbReference>
<dbReference type="GO" id="GO:2001237">
    <property type="term" value="P:negative regulation of extrinsic apoptotic signaling pathway"/>
    <property type="evidence" value="ECO:0000314"/>
    <property type="project" value="MGI"/>
</dbReference>
<dbReference type="GO" id="GO:2001240">
    <property type="term" value="P:negative regulation of extrinsic apoptotic signaling pathway in absence of ligand"/>
    <property type="evidence" value="ECO:0000314"/>
    <property type="project" value="MGI"/>
</dbReference>
<dbReference type="GO" id="GO:0035265">
    <property type="term" value="P:organ growth"/>
    <property type="evidence" value="ECO:0000315"/>
    <property type="project" value="MGI"/>
</dbReference>
<dbReference type="GO" id="GO:0045579">
    <property type="term" value="P:positive regulation of B cell differentiation"/>
    <property type="evidence" value="ECO:0000314"/>
    <property type="project" value="MGI"/>
</dbReference>
<dbReference type="GO" id="GO:0030890">
    <property type="term" value="P:positive regulation of B cell proliferation"/>
    <property type="evidence" value="ECO:0000314"/>
    <property type="project" value="MGI"/>
</dbReference>
<dbReference type="GO" id="GO:0032722">
    <property type="term" value="P:positive regulation of chemokine production"/>
    <property type="evidence" value="ECO:0007669"/>
    <property type="project" value="Ensembl"/>
</dbReference>
<dbReference type="GO" id="GO:0001961">
    <property type="term" value="P:positive regulation of cytokine-mediated signaling pathway"/>
    <property type="evidence" value="ECO:0007669"/>
    <property type="project" value="Ensembl"/>
</dbReference>
<dbReference type="GO" id="GO:0010628">
    <property type="term" value="P:positive regulation of gene expression"/>
    <property type="evidence" value="ECO:0000314"/>
    <property type="project" value="MGI"/>
</dbReference>
<dbReference type="GO" id="GO:0046622">
    <property type="term" value="P:positive regulation of organ growth"/>
    <property type="evidence" value="ECO:0000315"/>
    <property type="project" value="MGI"/>
</dbReference>
<dbReference type="GO" id="GO:0045582">
    <property type="term" value="P:positive regulation of T cell differentiation"/>
    <property type="evidence" value="ECO:0000314"/>
    <property type="project" value="MGI"/>
</dbReference>
<dbReference type="GO" id="GO:0010468">
    <property type="term" value="P:regulation of gene expression"/>
    <property type="evidence" value="ECO:0000314"/>
    <property type="project" value="MGI"/>
</dbReference>
<dbReference type="GO" id="GO:0002360">
    <property type="term" value="P:T cell lineage commitment"/>
    <property type="evidence" value="ECO:0000315"/>
    <property type="project" value="MGI"/>
</dbReference>
<dbReference type="FunFam" id="1.20.1250.50:FF:000001">
    <property type="entry name" value="Interleukin-7"/>
    <property type="match status" value="1"/>
</dbReference>
<dbReference type="Gene3D" id="1.20.1250.50">
    <property type="match status" value="1"/>
</dbReference>
<dbReference type="InterPro" id="IPR001181">
    <property type="entry name" value="IL-7"/>
</dbReference>
<dbReference type="InterPro" id="IPR018049">
    <property type="entry name" value="IL-7/IL-9_CS"/>
</dbReference>
<dbReference type="InterPro" id="IPR038325">
    <property type="entry name" value="IL7_sf"/>
</dbReference>
<dbReference type="PANTHER" id="PTHR48492">
    <property type="entry name" value="INTERLEUKIN-7"/>
    <property type="match status" value="1"/>
</dbReference>
<dbReference type="PANTHER" id="PTHR48492:SF1">
    <property type="entry name" value="INTERLEUKIN-7"/>
    <property type="match status" value="1"/>
</dbReference>
<dbReference type="Pfam" id="PF01415">
    <property type="entry name" value="IL7"/>
    <property type="match status" value="1"/>
</dbReference>
<dbReference type="PIRSF" id="PIRSF001942">
    <property type="entry name" value="IL-7"/>
    <property type="match status" value="1"/>
</dbReference>
<dbReference type="PRINTS" id="PR00435">
    <property type="entry name" value="INTERLEUKIN7"/>
</dbReference>
<dbReference type="SMART" id="SM00127">
    <property type="entry name" value="IL7"/>
    <property type="match status" value="1"/>
</dbReference>
<dbReference type="PROSITE" id="PS00255">
    <property type="entry name" value="INTERLEUKIN_7_9"/>
    <property type="match status" value="1"/>
</dbReference>
<protein>
    <recommendedName>
        <fullName>Interleukin-7</fullName>
        <shortName>IL-7</shortName>
    </recommendedName>
</protein>
<gene>
    <name type="primary">Il7</name>
    <name type="synonym">Il-7</name>
</gene>
<reference key="1">
    <citation type="journal article" date="1988" name="Nature">
        <title>Stimulation of B-cell progenitors by cloned murine interleukin-7.</title>
        <authorList>
            <person name="Namen A.E."/>
            <person name="Lupton S."/>
            <person name="Hjerrild K."/>
            <person name="Wignall J."/>
            <person name="Mochizuki D.Y."/>
            <person name="Schmierer A."/>
            <person name="Mosley B."/>
            <person name="March C.J."/>
            <person name="Urdal D."/>
            <person name="Gillis S."/>
            <person name="Cosman D."/>
            <person name="Goodwin R.G."/>
        </authorList>
    </citation>
    <scope>NUCLEOTIDE SEQUENCE [MRNA]</scope>
    <scope>PARTIAL PROTEIN SEQUENCE</scope>
</reference>
<reference key="2">
    <citation type="journal article" date="1990" name="J. Immunol.">
        <title>Characterization of the human and murine IL-7 genes.</title>
        <authorList>
            <person name="Lupton S.D."/>
            <person name="Gimpel S."/>
            <person name="Jerzy R."/>
            <person name="Brunton L.L."/>
            <person name="Hjerrild K.A."/>
            <person name="Cosman D."/>
            <person name="Goodwin R.G."/>
        </authorList>
    </citation>
    <scope>NUCLEOTIDE SEQUENCE [GENOMIC DNA] OF 1-119</scope>
</reference>
<reference key="3">
    <citation type="journal article" date="1995" name="J. Exp. Med.">
        <title>Lymphopenia in interleukin (IL)-7 gene-deleted mice identifies IL-7 as a nonredundant cytokine.</title>
        <authorList>
            <person name="von Freeden-Jeffry U."/>
            <person name="Vieira P."/>
            <person name="Lucian L.A."/>
            <person name="McNeil T."/>
            <person name="Burdach S.E."/>
            <person name="Murray R."/>
        </authorList>
    </citation>
    <scope>FUNCTION</scope>
    <scope>DISRUPTION PHENOTYPE</scope>
</reference>
<reference key="4">
    <citation type="journal article" date="2017" name="Immunol. Cell Biol.">
        <title>Interleukin-7 in the transition of bone marrow progenitors to the thymus.</title>
        <authorList>
            <person name="Plumb A.W."/>
            <person name="Sheikh A."/>
            <person name="Carlow D.A."/>
            <person name="Patton D.T."/>
            <person name="Ziltener H.J."/>
            <person name="Abraham N."/>
        </authorList>
    </citation>
    <scope>FUNCTION</scope>
</reference>
<sequence>MFHVSFRYIFGIPPLILVLLPVTSSECHIKDKEGKAYESVLMISIDELDKMTGTDSNCPNNEPNFFRKHVCDDTKEAAFLNRAARKLKQFLKMNISEEFNVHLLTVSQGTQTLVNCTSKEEKNVKEQKKNDACFLKRLLREIKTCWNKILKGSI</sequence>
<feature type="signal peptide">
    <location>
        <begin position="1"/>
        <end position="25"/>
    </location>
</feature>
<feature type="chain" id="PRO_0000015624" description="Interleukin-7">
    <location>
        <begin position="26"/>
        <end position="154"/>
    </location>
</feature>
<feature type="glycosylation site" description="N-linked (GlcNAc...) asparagine" evidence="2">
    <location>
        <position position="94"/>
    </location>
</feature>
<feature type="glycosylation site" description="N-linked (GlcNAc...) asparagine" evidence="2">
    <location>
        <position position="115"/>
    </location>
</feature>
<feature type="disulfide bond" evidence="1">
    <location>
        <begin position="27"/>
        <end position="145"/>
    </location>
</feature>
<feature type="disulfide bond" evidence="1">
    <location>
        <begin position="58"/>
        <end position="133"/>
    </location>
</feature>
<feature type="disulfide bond" evidence="1">
    <location>
        <begin position="71"/>
        <end position="116"/>
    </location>
</feature>
<comment type="function">
    <text evidence="1 3 4">Hematopoietic cytokine that plays an essential role in the development, expansion, and survival of naive and memory T-cells and B-cells thereby regulating the number of mature lymphocytes and maintaining lymphoid homeostasis (PubMed:28811625, PubMed:7699333). Mechanistically, exerts its biological effects through a receptor composed of IL7RA subunit and the cytokine receptor common subunit gamma/CSF2RG. Binding to the receptor leads to activation of various kinases including JAK1 or JAK3 depending on the cell type and subsequently propagation of signals through activation of several downstream signaling pathways including the PI3K/Akt/mTOR or the JAK-STAT5.</text>
</comment>
<comment type="subunit">
    <text evidence="1">Interacts with IL7R and CSF2RG.</text>
</comment>
<comment type="subcellular location">
    <subcellularLocation>
        <location evidence="1">Secreted</location>
    </subcellularLocation>
</comment>
<comment type="PTM">
    <text evidence="5">Three disulfide bonds are present.</text>
</comment>
<comment type="disruption phenotype">
    <text evidence="4">Deletion mice appear healthy at birth and develop normally. Both sexes are fertile. However, they exhibit severe peripheral blood and tissue lymphoid abnormalities showing a strong dependence on IL7 for proper expansion of lymphoid lineages.</text>
</comment>
<comment type="similarity">
    <text evidence="5">Belongs to the IL-7/IL-9 family.</text>
</comment>
<name>IL7_MOUSE</name>
<accession>P10168</accession>